<protein>
    <recommendedName>
        <fullName evidence="1">Polyribonucleotide nucleotidyltransferase</fullName>
        <ecNumber evidence="1">2.7.7.8</ecNumber>
    </recommendedName>
    <alternativeName>
        <fullName evidence="1">Polynucleotide phosphorylase</fullName>
        <shortName evidence="1">PNPase</shortName>
    </alternativeName>
</protein>
<sequence length="709" mass="77495">MQVFSMEIAGRTLTIETGRVAKQAGGSVLARYGDTVVLVTATGSKEPRPGIDFFPLTVDYEERLYAVGKIPGGFIKREGRPTEKAILSARLIDRPIRPLFPKGFRNDVQVVATVMSVDQDCPPDIVGMIGASCALSLSDIPFEGPIGGVLVGRVDGKLLINPTMEQAEKSDMHLVVAGTKDAVMMVEAGANEVPEEDMIEAIMFGHQEIQRIVAFQEEMVAVAGKPKREVPLKQINPELEQAVREYVGDKLRNAIQNPDKLSREADIQAVMKETVEALLPHFPEEEKDIRTVLDTMEKEIVRKLITVDKQRPDGRKMDEIRPISVEVGILPRTHGSGLFTRGQTQVLNVCTLGTIADLQILDGLGVEESKRYMHHYNFPPYSVGETRPMRGPGRREIGHGALAERALLPVIPSEDEFPYTIRLVSEAVESNGSTSMASVCGSTLSLMNAGVPIKKPVAGIAMGLIKEGEHFSILSDIQGMEDHLGDMDFKVAGTADGVTALQMDIKIKGVNREILTQALQQARKGRLFILDKMLAVIDKPAAEMSPYAPRIITMSIDPDKIREVIGPGGKVINKIIAETGVKIDIEDDGRIFIAATDTEAANKAVRIIESITADVEVGKVYTGKVTRIMNFGAFVEVLPGKEGLIHISQLAEERVAKVEDVVKIGDEVTVKVVEIDKQGRINLSRKEVLKANKPAVTGGARPDEMRRRF</sequence>
<reference key="1">
    <citation type="journal article" date="2008" name="J. Bacteriol.">
        <title>The genome of Heliobacterium modesticaldum, a phototrophic representative of the Firmicutes containing the simplest photosynthetic apparatus.</title>
        <authorList>
            <person name="Sattley W.M."/>
            <person name="Madigan M.T."/>
            <person name="Swingley W.D."/>
            <person name="Cheung P.C."/>
            <person name="Clocksin K.M."/>
            <person name="Conrad A.L."/>
            <person name="Dejesa L.C."/>
            <person name="Honchak B.M."/>
            <person name="Jung D.O."/>
            <person name="Karbach L.E."/>
            <person name="Kurdoglu A."/>
            <person name="Lahiri S."/>
            <person name="Mastrian S.D."/>
            <person name="Page L.E."/>
            <person name="Taylor H.L."/>
            <person name="Wang Z.T."/>
            <person name="Raymond J."/>
            <person name="Chen M."/>
            <person name="Blankenship R.E."/>
            <person name="Touchman J.W."/>
        </authorList>
    </citation>
    <scope>NUCLEOTIDE SEQUENCE [LARGE SCALE GENOMIC DNA]</scope>
    <source>
        <strain>ATCC 51547 / Ice1</strain>
    </source>
</reference>
<keyword id="KW-0963">Cytoplasm</keyword>
<keyword id="KW-0460">Magnesium</keyword>
<keyword id="KW-0479">Metal-binding</keyword>
<keyword id="KW-0548">Nucleotidyltransferase</keyword>
<keyword id="KW-1185">Reference proteome</keyword>
<keyword id="KW-0694">RNA-binding</keyword>
<keyword id="KW-0808">Transferase</keyword>
<dbReference type="EC" id="2.7.7.8" evidence="1"/>
<dbReference type="EMBL" id="CP000930">
    <property type="protein sequence ID" value="ABZ84855.1"/>
    <property type="molecule type" value="Genomic_DNA"/>
</dbReference>
<dbReference type="SMR" id="B0THS2"/>
<dbReference type="STRING" id="498761.HM1_2322"/>
<dbReference type="KEGG" id="hmo:HM1_2322"/>
<dbReference type="eggNOG" id="COG1185">
    <property type="taxonomic scope" value="Bacteria"/>
</dbReference>
<dbReference type="HOGENOM" id="CLU_004217_2_2_9"/>
<dbReference type="Proteomes" id="UP000008550">
    <property type="component" value="Chromosome"/>
</dbReference>
<dbReference type="GO" id="GO:0005829">
    <property type="term" value="C:cytosol"/>
    <property type="evidence" value="ECO:0007669"/>
    <property type="project" value="TreeGrafter"/>
</dbReference>
<dbReference type="GO" id="GO:0000175">
    <property type="term" value="F:3'-5'-RNA exonuclease activity"/>
    <property type="evidence" value="ECO:0007669"/>
    <property type="project" value="TreeGrafter"/>
</dbReference>
<dbReference type="GO" id="GO:0000287">
    <property type="term" value="F:magnesium ion binding"/>
    <property type="evidence" value="ECO:0007669"/>
    <property type="project" value="UniProtKB-UniRule"/>
</dbReference>
<dbReference type="GO" id="GO:0004654">
    <property type="term" value="F:polyribonucleotide nucleotidyltransferase activity"/>
    <property type="evidence" value="ECO:0007669"/>
    <property type="project" value="UniProtKB-UniRule"/>
</dbReference>
<dbReference type="GO" id="GO:0003723">
    <property type="term" value="F:RNA binding"/>
    <property type="evidence" value="ECO:0007669"/>
    <property type="project" value="UniProtKB-UniRule"/>
</dbReference>
<dbReference type="GO" id="GO:0006402">
    <property type="term" value="P:mRNA catabolic process"/>
    <property type="evidence" value="ECO:0007669"/>
    <property type="project" value="UniProtKB-UniRule"/>
</dbReference>
<dbReference type="GO" id="GO:0006396">
    <property type="term" value="P:RNA processing"/>
    <property type="evidence" value="ECO:0007669"/>
    <property type="project" value="InterPro"/>
</dbReference>
<dbReference type="CDD" id="cd02393">
    <property type="entry name" value="KH-I_PNPase"/>
    <property type="match status" value="1"/>
</dbReference>
<dbReference type="CDD" id="cd11363">
    <property type="entry name" value="RNase_PH_PNPase_1"/>
    <property type="match status" value="1"/>
</dbReference>
<dbReference type="CDD" id="cd11364">
    <property type="entry name" value="RNase_PH_PNPase_2"/>
    <property type="match status" value="1"/>
</dbReference>
<dbReference type="CDD" id="cd04472">
    <property type="entry name" value="S1_PNPase"/>
    <property type="match status" value="1"/>
</dbReference>
<dbReference type="FunFam" id="2.40.50.140:FF:000023">
    <property type="entry name" value="Polyribonucleotide nucleotidyltransferase"/>
    <property type="match status" value="1"/>
</dbReference>
<dbReference type="FunFam" id="3.30.1370.10:FF:000001">
    <property type="entry name" value="Polyribonucleotide nucleotidyltransferase"/>
    <property type="match status" value="1"/>
</dbReference>
<dbReference type="FunFam" id="3.30.230.70:FF:000001">
    <property type="entry name" value="Polyribonucleotide nucleotidyltransferase"/>
    <property type="match status" value="1"/>
</dbReference>
<dbReference type="FunFam" id="3.30.230.70:FF:000002">
    <property type="entry name" value="Polyribonucleotide nucleotidyltransferase"/>
    <property type="match status" value="1"/>
</dbReference>
<dbReference type="Gene3D" id="3.30.230.70">
    <property type="entry name" value="GHMP Kinase, N-terminal domain"/>
    <property type="match status" value="2"/>
</dbReference>
<dbReference type="Gene3D" id="3.30.1370.10">
    <property type="entry name" value="K Homology domain, type 1"/>
    <property type="match status" value="1"/>
</dbReference>
<dbReference type="Gene3D" id="2.40.50.140">
    <property type="entry name" value="Nucleic acid-binding proteins"/>
    <property type="match status" value="1"/>
</dbReference>
<dbReference type="HAMAP" id="MF_01595">
    <property type="entry name" value="PNPase"/>
    <property type="match status" value="1"/>
</dbReference>
<dbReference type="InterPro" id="IPR001247">
    <property type="entry name" value="ExoRNase_PH_dom1"/>
</dbReference>
<dbReference type="InterPro" id="IPR015847">
    <property type="entry name" value="ExoRNase_PH_dom2"/>
</dbReference>
<dbReference type="InterPro" id="IPR036345">
    <property type="entry name" value="ExoRNase_PH_dom2_sf"/>
</dbReference>
<dbReference type="InterPro" id="IPR004087">
    <property type="entry name" value="KH_dom"/>
</dbReference>
<dbReference type="InterPro" id="IPR004088">
    <property type="entry name" value="KH_dom_type_1"/>
</dbReference>
<dbReference type="InterPro" id="IPR036612">
    <property type="entry name" value="KH_dom_type_1_sf"/>
</dbReference>
<dbReference type="InterPro" id="IPR012340">
    <property type="entry name" value="NA-bd_OB-fold"/>
</dbReference>
<dbReference type="InterPro" id="IPR012162">
    <property type="entry name" value="PNPase"/>
</dbReference>
<dbReference type="InterPro" id="IPR027408">
    <property type="entry name" value="PNPase/RNase_PH_dom_sf"/>
</dbReference>
<dbReference type="InterPro" id="IPR015848">
    <property type="entry name" value="PNPase_PH_RNA-bd_bac/org-type"/>
</dbReference>
<dbReference type="InterPro" id="IPR036456">
    <property type="entry name" value="PNPase_PH_RNA-bd_sf"/>
</dbReference>
<dbReference type="InterPro" id="IPR020568">
    <property type="entry name" value="Ribosomal_Su5_D2-typ_SF"/>
</dbReference>
<dbReference type="InterPro" id="IPR003029">
    <property type="entry name" value="S1_domain"/>
</dbReference>
<dbReference type="NCBIfam" id="TIGR03591">
    <property type="entry name" value="polynuc_phos"/>
    <property type="match status" value="1"/>
</dbReference>
<dbReference type="NCBIfam" id="NF008805">
    <property type="entry name" value="PRK11824.1"/>
    <property type="match status" value="1"/>
</dbReference>
<dbReference type="PANTHER" id="PTHR11252">
    <property type="entry name" value="POLYRIBONUCLEOTIDE NUCLEOTIDYLTRANSFERASE"/>
    <property type="match status" value="1"/>
</dbReference>
<dbReference type="PANTHER" id="PTHR11252:SF0">
    <property type="entry name" value="POLYRIBONUCLEOTIDE NUCLEOTIDYLTRANSFERASE 1, MITOCHONDRIAL"/>
    <property type="match status" value="1"/>
</dbReference>
<dbReference type="Pfam" id="PF00013">
    <property type="entry name" value="KH_1"/>
    <property type="match status" value="1"/>
</dbReference>
<dbReference type="Pfam" id="PF03726">
    <property type="entry name" value="PNPase"/>
    <property type="match status" value="1"/>
</dbReference>
<dbReference type="Pfam" id="PF01138">
    <property type="entry name" value="RNase_PH"/>
    <property type="match status" value="2"/>
</dbReference>
<dbReference type="Pfam" id="PF03725">
    <property type="entry name" value="RNase_PH_C"/>
    <property type="match status" value="2"/>
</dbReference>
<dbReference type="Pfam" id="PF00575">
    <property type="entry name" value="S1"/>
    <property type="match status" value="1"/>
</dbReference>
<dbReference type="PIRSF" id="PIRSF005499">
    <property type="entry name" value="PNPase"/>
    <property type="match status" value="1"/>
</dbReference>
<dbReference type="SMART" id="SM00322">
    <property type="entry name" value="KH"/>
    <property type="match status" value="1"/>
</dbReference>
<dbReference type="SMART" id="SM00316">
    <property type="entry name" value="S1"/>
    <property type="match status" value="1"/>
</dbReference>
<dbReference type="SUPFAM" id="SSF54791">
    <property type="entry name" value="Eukaryotic type KH-domain (KH-domain type I)"/>
    <property type="match status" value="1"/>
</dbReference>
<dbReference type="SUPFAM" id="SSF50249">
    <property type="entry name" value="Nucleic acid-binding proteins"/>
    <property type="match status" value="1"/>
</dbReference>
<dbReference type="SUPFAM" id="SSF46915">
    <property type="entry name" value="Polynucleotide phosphorylase/guanosine pentaphosphate synthase (PNPase/GPSI), domain 3"/>
    <property type="match status" value="1"/>
</dbReference>
<dbReference type="SUPFAM" id="SSF55666">
    <property type="entry name" value="Ribonuclease PH domain 2-like"/>
    <property type="match status" value="2"/>
</dbReference>
<dbReference type="SUPFAM" id="SSF54211">
    <property type="entry name" value="Ribosomal protein S5 domain 2-like"/>
    <property type="match status" value="2"/>
</dbReference>
<dbReference type="PROSITE" id="PS50084">
    <property type="entry name" value="KH_TYPE_1"/>
    <property type="match status" value="1"/>
</dbReference>
<dbReference type="PROSITE" id="PS50126">
    <property type="entry name" value="S1"/>
    <property type="match status" value="1"/>
</dbReference>
<accession>B0THS2</accession>
<feature type="chain" id="PRO_0000381904" description="Polyribonucleotide nucleotidyltransferase">
    <location>
        <begin position="1"/>
        <end position="709"/>
    </location>
</feature>
<feature type="domain" description="KH" evidence="1">
    <location>
        <begin position="549"/>
        <end position="608"/>
    </location>
</feature>
<feature type="domain" description="S1 motif" evidence="1">
    <location>
        <begin position="618"/>
        <end position="686"/>
    </location>
</feature>
<feature type="binding site" evidence="1">
    <location>
        <position position="482"/>
    </location>
    <ligand>
        <name>Mg(2+)</name>
        <dbReference type="ChEBI" id="CHEBI:18420"/>
    </ligand>
</feature>
<feature type="binding site" evidence="1">
    <location>
        <position position="488"/>
    </location>
    <ligand>
        <name>Mg(2+)</name>
        <dbReference type="ChEBI" id="CHEBI:18420"/>
    </ligand>
</feature>
<comment type="function">
    <text evidence="1">Involved in mRNA degradation. Catalyzes the phosphorolysis of single-stranded polyribonucleotides processively in the 3'- to 5'-direction.</text>
</comment>
<comment type="catalytic activity">
    <reaction evidence="1">
        <text>RNA(n+1) + phosphate = RNA(n) + a ribonucleoside 5'-diphosphate</text>
        <dbReference type="Rhea" id="RHEA:22096"/>
        <dbReference type="Rhea" id="RHEA-COMP:14527"/>
        <dbReference type="Rhea" id="RHEA-COMP:17342"/>
        <dbReference type="ChEBI" id="CHEBI:43474"/>
        <dbReference type="ChEBI" id="CHEBI:57930"/>
        <dbReference type="ChEBI" id="CHEBI:140395"/>
        <dbReference type="EC" id="2.7.7.8"/>
    </reaction>
</comment>
<comment type="cofactor">
    <cofactor evidence="1">
        <name>Mg(2+)</name>
        <dbReference type="ChEBI" id="CHEBI:18420"/>
    </cofactor>
</comment>
<comment type="subcellular location">
    <subcellularLocation>
        <location evidence="1">Cytoplasm</location>
    </subcellularLocation>
</comment>
<comment type="similarity">
    <text evidence="1">Belongs to the polyribonucleotide nucleotidyltransferase family.</text>
</comment>
<name>PNP_HELMI</name>
<organism>
    <name type="scientific">Heliobacterium modesticaldum (strain ATCC 51547 / Ice1)</name>
    <dbReference type="NCBI Taxonomy" id="498761"/>
    <lineage>
        <taxon>Bacteria</taxon>
        <taxon>Bacillati</taxon>
        <taxon>Bacillota</taxon>
        <taxon>Clostridia</taxon>
        <taxon>Eubacteriales</taxon>
        <taxon>Heliobacteriaceae</taxon>
        <taxon>Heliomicrobium</taxon>
    </lineage>
</organism>
<proteinExistence type="inferred from homology"/>
<gene>
    <name evidence="1" type="primary">pnp</name>
    <name type="ordered locus">Helmi_22300</name>
    <name type="ORF">HM1_2322</name>
</gene>
<evidence type="ECO:0000255" key="1">
    <source>
        <dbReference type="HAMAP-Rule" id="MF_01595"/>
    </source>
</evidence>